<name>VASN_HUMAN</name>
<keyword id="KW-1015">Disulfide bond</keyword>
<keyword id="KW-0245">EGF-like domain</keyword>
<keyword id="KW-0325">Glycoprotein</keyword>
<keyword id="KW-0433">Leucine-rich repeat</keyword>
<keyword id="KW-0472">Membrane</keyword>
<keyword id="KW-1267">Proteomics identification</keyword>
<keyword id="KW-1185">Reference proteome</keyword>
<keyword id="KW-0677">Repeat</keyword>
<keyword id="KW-0964">Secreted</keyword>
<keyword id="KW-0732">Signal</keyword>
<keyword id="KW-0812">Transmembrane</keyword>
<keyword id="KW-1133">Transmembrane helix</keyword>
<protein>
    <recommendedName>
        <fullName>Vasorin</fullName>
    </recommendedName>
    <alternativeName>
        <fullName>Protein slit-like 2</fullName>
    </alternativeName>
</protein>
<comment type="function">
    <text evidence="6">May act as an inhibitor of TGF-beta signaling.</text>
</comment>
<comment type="subunit">
    <text evidence="6">Interacts with TGFB1, TGFB2 and TGFB3.</text>
</comment>
<comment type="interaction">
    <interactant intactId="EBI-10249550">
        <id>Q6EMK4</id>
    </interactant>
    <interactant intactId="EBI-10173507">
        <id>Q6UY14-3</id>
        <label>ADAMTSL4</label>
    </interactant>
    <organismsDiffer>false</organismsDiffer>
    <experiments>3</experiments>
</comment>
<comment type="interaction">
    <interactant intactId="EBI-10249550">
        <id>Q6EMK4</id>
    </interactant>
    <interactant intactId="EBI-2808854">
        <id>Q92482</id>
        <label>AQP3</label>
    </interactant>
    <organismsDiffer>false</organismsDiffer>
    <experiments>3</experiments>
</comment>
<comment type="interaction">
    <interactant intactId="EBI-10249550">
        <id>Q6EMK4</id>
    </interactant>
    <interactant intactId="EBI-12139335">
        <id>Q8N6W0</id>
        <label>CELF5</label>
    </interactant>
    <organismsDiffer>false</organismsDiffer>
    <experiments>3</experiments>
</comment>
<comment type="interaction">
    <interactant intactId="EBI-10249550">
        <id>Q6EMK4</id>
    </interactant>
    <interactant intactId="EBI-12868028">
        <id>A0PJX0</id>
        <label>CIB4</label>
    </interactant>
    <organismsDiffer>false</organismsDiffer>
    <experiments>3</experiments>
</comment>
<comment type="interaction">
    <interactant intactId="EBI-10249550">
        <id>Q6EMK4</id>
    </interactant>
    <interactant intactId="EBI-3867333">
        <id>A8MQ03</id>
        <label>CYSRT1</label>
    </interactant>
    <organismsDiffer>false</organismsDiffer>
    <experiments>6</experiments>
</comment>
<comment type="interaction">
    <interactant intactId="EBI-10249550">
        <id>Q6EMK4</id>
    </interactant>
    <interactant intactId="EBI-747754">
        <id>P28799</id>
        <label>GRN</label>
    </interactant>
    <organismsDiffer>false</organismsDiffer>
    <experiments>3</experiments>
</comment>
<comment type="interaction">
    <interactant intactId="EBI-10249550">
        <id>Q6EMK4</id>
    </interactant>
    <interactant intactId="EBI-11978177">
        <id>Q96NT3-2</id>
        <label>GUCD1</label>
    </interactant>
    <organismsDiffer>false</organismsDiffer>
    <experiments>3</experiments>
</comment>
<comment type="interaction">
    <interactant intactId="EBI-10249550">
        <id>Q6EMK4</id>
    </interactant>
    <interactant intactId="EBI-740785">
        <id>P49639</id>
        <label>HOXA1</label>
    </interactant>
    <organismsDiffer>false</organismsDiffer>
    <experiments>5</experiments>
</comment>
<comment type="interaction">
    <interactant intactId="EBI-10249550">
        <id>Q6EMK4</id>
    </interactant>
    <interactant intactId="EBI-948001">
        <id>Q15323</id>
        <label>KRT31</label>
    </interactant>
    <organismsDiffer>false</organismsDiffer>
    <experiments>3</experiments>
</comment>
<comment type="interaction">
    <interactant intactId="EBI-10249550">
        <id>Q6EMK4</id>
    </interactant>
    <interactant intactId="EBI-11959885">
        <id>Q07627</id>
        <label>KRTAP1-1</label>
    </interactant>
    <organismsDiffer>false</organismsDiffer>
    <experiments>3</experiments>
</comment>
<comment type="interaction">
    <interactant intactId="EBI-10249550">
        <id>Q6EMK4</id>
    </interactant>
    <interactant intactId="EBI-11749135">
        <id>Q8IUG1</id>
        <label>KRTAP1-3</label>
    </interactant>
    <organismsDiffer>false</organismsDiffer>
    <experiments>3</experiments>
</comment>
<comment type="interaction">
    <interactant intactId="EBI-10249550">
        <id>Q6EMK4</id>
    </interactant>
    <interactant intactId="EBI-12012928">
        <id>P60371</id>
        <label>KRTAP10-6</label>
    </interactant>
    <organismsDiffer>false</organismsDiffer>
    <experiments>3</experiments>
</comment>
<comment type="interaction">
    <interactant intactId="EBI-10249550">
        <id>Q6EMK4</id>
    </interactant>
    <interactant intactId="EBI-10172290">
        <id>P60409</id>
        <label>KRTAP10-7</label>
    </interactant>
    <organismsDiffer>false</organismsDiffer>
    <experiments>3</experiments>
</comment>
<comment type="interaction">
    <interactant intactId="EBI-10249550">
        <id>Q6EMK4</id>
    </interactant>
    <interactant intactId="EBI-10171774">
        <id>P60410</id>
        <label>KRTAP10-8</label>
    </interactant>
    <organismsDiffer>false</organismsDiffer>
    <experiments>3</experiments>
</comment>
<comment type="interaction">
    <interactant intactId="EBI-10249550">
        <id>Q6EMK4</id>
    </interactant>
    <interactant intactId="EBI-1052037">
        <id>Q8IUC1</id>
        <label>KRTAP11-1</label>
    </interactant>
    <organismsDiffer>false</organismsDiffer>
    <experiments>3</experiments>
</comment>
<comment type="interaction">
    <interactant intactId="EBI-10249550">
        <id>Q6EMK4</id>
    </interactant>
    <interactant intactId="EBI-10176379">
        <id>P59991</id>
        <label>KRTAP12-2</label>
    </interactant>
    <organismsDiffer>false</organismsDiffer>
    <experiments>3</experiments>
</comment>
<comment type="interaction">
    <interactant intactId="EBI-10249550">
        <id>Q6EMK4</id>
    </interactant>
    <interactant intactId="EBI-11953334">
        <id>P60328</id>
        <label>KRTAP12-3</label>
    </interactant>
    <organismsDiffer>false</organismsDiffer>
    <experiments>6</experiments>
</comment>
<comment type="interaction">
    <interactant intactId="EBI-10249550">
        <id>Q6EMK4</id>
    </interactant>
    <interactant intactId="EBI-11988175">
        <id>Q9BYP8</id>
        <label>KRTAP17-1</label>
    </interactant>
    <organismsDiffer>false</organismsDiffer>
    <experiments>3</experiments>
</comment>
<comment type="interaction">
    <interactant intactId="EBI-10249550">
        <id>Q6EMK4</id>
    </interactant>
    <interactant intactId="EBI-14065470">
        <id>Q9BYR9</id>
        <label>KRTAP2-4</label>
    </interactant>
    <organismsDiffer>false</organismsDiffer>
    <experiments>3</experiments>
</comment>
<comment type="interaction">
    <interactant intactId="EBI-10249550">
        <id>Q6EMK4</id>
    </interactant>
    <interactant intactId="EBI-3957672">
        <id>Q6PEX3</id>
        <label>KRTAP26-1</label>
    </interactant>
    <organismsDiffer>false</organismsDiffer>
    <experiments>3</experiments>
</comment>
<comment type="interaction">
    <interactant intactId="EBI-10249550">
        <id>Q6EMK4</id>
    </interactant>
    <interactant intactId="EBI-9996449">
        <id>Q9BYR8</id>
        <label>KRTAP3-1</label>
    </interactant>
    <organismsDiffer>false</organismsDiffer>
    <experiments>5</experiments>
</comment>
<comment type="interaction">
    <interactant intactId="EBI-10249550">
        <id>Q6EMK4</id>
    </interactant>
    <interactant intactId="EBI-751260">
        <id>Q9BYR7</id>
        <label>KRTAP3-2</label>
    </interactant>
    <organismsDiffer>false</organismsDiffer>
    <experiments>3</experiments>
</comment>
<comment type="interaction">
    <interactant intactId="EBI-10249550">
        <id>Q6EMK4</id>
    </interactant>
    <interactant intactId="EBI-34579671">
        <id>Q9BYQ7</id>
        <label>KRTAP4-1</label>
    </interactant>
    <organismsDiffer>false</organismsDiffer>
    <experiments>3</experiments>
</comment>
<comment type="interaction">
    <interactant intactId="EBI-10249550">
        <id>Q6EMK4</id>
    </interactant>
    <interactant intactId="EBI-10302392">
        <id>Q9BYQ6</id>
        <label>KRTAP4-11</label>
    </interactant>
    <organismsDiffer>false</organismsDiffer>
    <experiments>6</experiments>
</comment>
<comment type="interaction">
    <interactant intactId="EBI-10249550">
        <id>Q6EMK4</id>
    </interactant>
    <interactant intactId="EBI-10172511">
        <id>Q9BYR5</id>
        <label>KRTAP4-2</label>
    </interactant>
    <organismsDiffer>false</organismsDiffer>
    <experiments>3</experiments>
</comment>
<comment type="interaction">
    <interactant intactId="EBI-10249550">
        <id>Q6EMK4</id>
    </interactant>
    <interactant intactId="EBI-11993296">
        <id>Q6L8G4</id>
        <label>KRTAP5-11</label>
    </interactant>
    <organismsDiffer>false</organismsDiffer>
    <experiments>3</experiments>
</comment>
<comment type="interaction">
    <interactant intactId="EBI-10249550">
        <id>Q6EMK4</id>
    </interactant>
    <interactant intactId="EBI-22311199">
        <id>Q3LI67</id>
        <label>KRTAP6-3</label>
    </interactant>
    <organismsDiffer>false</organismsDiffer>
    <experiments>3</experiments>
</comment>
<comment type="interaction">
    <interactant intactId="EBI-10249550">
        <id>Q6EMK4</id>
    </interactant>
    <interactant intactId="EBI-1043191">
        <id>Q9BYQ3</id>
        <label>KRTAP9-3</label>
    </interactant>
    <organismsDiffer>false</organismsDiffer>
    <experiments>6</experiments>
</comment>
<comment type="interaction">
    <interactant intactId="EBI-10249550">
        <id>Q6EMK4</id>
    </interactant>
    <interactant intactId="EBI-11958364">
        <id>Q9BYQ0</id>
        <label>KRTAP9-8</label>
    </interactant>
    <organismsDiffer>false</organismsDiffer>
    <experiments>3</experiments>
</comment>
<comment type="interaction">
    <interactant intactId="EBI-10249550">
        <id>Q6EMK4</id>
    </interactant>
    <interactant intactId="EBI-12224199">
        <id>Q5T751</id>
        <label>LCE1C</label>
    </interactant>
    <organismsDiffer>false</organismsDiffer>
    <experiments>3</experiments>
</comment>
<comment type="interaction">
    <interactant intactId="EBI-10249550">
        <id>Q6EMK4</id>
    </interactant>
    <interactant intactId="EBI-10246607">
        <id>Q5TA79</id>
        <label>LCE2A</label>
    </interactant>
    <organismsDiffer>false</organismsDiffer>
    <experiments>3</experiments>
</comment>
<comment type="interaction">
    <interactant intactId="EBI-10249550">
        <id>Q6EMK4</id>
    </interactant>
    <interactant intactId="EBI-11973993">
        <id>Q5TA81</id>
        <label>LCE2C</label>
    </interactant>
    <organismsDiffer>false</organismsDiffer>
    <experiments>3</experiments>
</comment>
<comment type="interaction">
    <interactant intactId="EBI-10249550">
        <id>Q6EMK4</id>
    </interactant>
    <interactant intactId="EBI-10246750">
        <id>Q5TA82</id>
        <label>LCE2D</label>
    </interactant>
    <organismsDiffer>false</organismsDiffer>
    <experiments>3</experiments>
</comment>
<comment type="interaction">
    <interactant intactId="EBI-10249550">
        <id>Q6EMK4</id>
    </interactant>
    <interactant intactId="EBI-10246358">
        <id>Q5TA78</id>
        <label>LCE4A</label>
    </interactant>
    <organismsDiffer>false</organismsDiffer>
    <experiments>3</experiments>
</comment>
<comment type="interaction">
    <interactant intactId="EBI-10249550">
        <id>Q6EMK4</id>
    </interactant>
    <interactant intactId="EBI-739832">
        <id>Q8TBB1</id>
        <label>LNX1</label>
    </interactant>
    <organismsDiffer>false</organismsDiffer>
    <experiments>3</experiments>
</comment>
<comment type="interaction">
    <interactant intactId="EBI-10249550">
        <id>Q6EMK4</id>
    </interactant>
    <interactant intactId="EBI-724076">
        <id>Q99750</id>
        <label>MDFI</label>
    </interactant>
    <organismsDiffer>false</organismsDiffer>
    <experiments>3</experiments>
</comment>
<comment type="interaction">
    <interactant intactId="EBI-10249550">
        <id>Q6EMK4</id>
    </interactant>
    <interactant intactId="EBI-16439278">
        <id>Q6FHY5</id>
        <label>MEOX2</label>
    </interactant>
    <organismsDiffer>false</organismsDiffer>
    <experiments>3</experiments>
</comment>
<comment type="interaction">
    <interactant intactId="EBI-10249550">
        <id>Q6EMK4</id>
    </interactant>
    <interactant intactId="EBI-11522433">
        <id>Q5JR59-3</id>
        <label>MTUS2</label>
    </interactant>
    <organismsDiffer>false</organismsDiffer>
    <experiments>3</experiments>
</comment>
<comment type="interaction">
    <interactant intactId="EBI-10249550">
        <id>Q6EMK4</id>
    </interactant>
    <interactant intactId="EBI-22310682">
        <id>P0DPK4</id>
        <label>NOTCH2NLC</label>
    </interactant>
    <organismsDiffer>false</organismsDiffer>
    <experiments>3</experiments>
</comment>
<comment type="interaction">
    <interactant intactId="EBI-10249550">
        <id>Q6EMK4</id>
    </interactant>
    <interactant intactId="EBI-13644623">
        <id>Q92570</id>
        <label>NR4A3</label>
    </interactant>
    <organismsDiffer>false</organismsDiffer>
    <experiments>3</experiments>
</comment>
<comment type="interaction">
    <interactant intactId="EBI-10249550">
        <id>Q6EMK4</id>
    </interactant>
    <interactant intactId="EBI-3918154">
        <id>Q9UGC6</id>
        <label>RGS17</label>
    </interactant>
    <organismsDiffer>false</organismsDiffer>
    <experiments>3</experiments>
</comment>
<comment type="interaction">
    <interactant intactId="EBI-10249550">
        <id>Q6EMK4</id>
    </interactant>
    <interactant intactId="EBI-874907">
        <id>P49795</id>
        <label>RGS19</label>
    </interactant>
    <organismsDiffer>false</organismsDiffer>
    <experiments>3</experiments>
</comment>
<comment type="interaction">
    <interactant intactId="EBI-10249550">
        <id>Q6EMK4</id>
    </interactant>
    <interactant intactId="EBI-10178530">
        <id>O76081-6</id>
        <label>RGS20</label>
    </interactant>
    <organismsDiffer>false</organismsDiffer>
    <experiments>3</experiments>
</comment>
<comment type="interaction">
    <interactant intactId="EBI-10249550">
        <id>Q6EMK4</id>
    </interactant>
    <interactant intactId="EBI-10225152">
        <id>Q96EP0-3</id>
        <label>RNF31</label>
    </interactant>
    <organismsDiffer>false</organismsDiffer>
    <experiments>3</experiments>
</comment>
<comment type="interaction">
    <interactant intactId="EBI-10249550">
        <id>Q6EMK4</id>
    </interactant>
    <interactant intactId="EBI-750494">
        <id>P49901</id>
        <label>SMCP</label>
    </interactant>
    <organismsDiffer>false</organismsDiffer>
    <experiments>3</experiments>
</comment>
<comment type="interaction">
    <interactant intactId="EBI-10249550">
        <id>Q6EMK4</id>
    </interactant>
    <interactant intactId="EBI-2562368">
        <id>P22735</id>
        <label>TGM1</label>
    </interactant>
    <organismsDiffer>false</organismsDiffer>
    <experiments>3</experiments>
</comment>
<comment type="interaction">
    <interactant intactId="EBI-10249550">
        <id>Q6EMK4</id>
    </interactant>
    <interactant intactId="EBI-742327">
        <id>Q15654</id>
        <label>TRIP6</label>
    </interactant>
    <organismsDiffer>false</organismsDiffer>
    <experiments>3</experiments>
</comment>
<comment type="interaction">
    <interactant intactId="EBI-10249550">
        <id>Q6EMK4</id>
    </interactant>
    <interactant intactId="EBI-11957238">
        <id>Q2TAL6</id>
        <label>VWC2</label>
    </interactant>
    <organismsDiffer>false</organismsDiffer>
    <experiments>3</experiments>
</comment>
<comment type="interaction">
    <interactant intactId="EBI-10249550">
        <id>Q6EMK4</id>
    </interactant>
    <interactant intactId="EBI-740727">
        <id>Q8TAU3</id>
        <label>ZNF417</label>
    </interactant>
    <organismsDiffer>false</organismsDiffer>
    <experiments>3</experiments>
</comment>
<comment type="interaction">
    <interactant intactId="EBI-10249550">
        <id>Q6EMK4</id>
    </interactant>
    <interactant intactId="EBI-11962574">
        <id>Q96EG3</id>
        <label>ZNF837</label>
    </interactant>
    <organismsDiffer>false</organismsDiffer>
    <experiments>3</experiments>
</comment>
<comment type="subcellular location">
    <subcellularLocation>
        <location evidence="13">Membrane</location>
        <topology evidence="13">Single-pass type I membrane protein</topology>
    </subcellularLocation>
    <subcellularLocation>
        <location evidence="6">Secreted</location>
    </subcellularLocation>
</comment>
<comment type="tissue specificity">
    <text evidence="6">Expressed at highest levels in aorta, at intermediate levels in kidney and placenta and at lowest levels in brain, heart, liver, lung and skeletal muscle. Within the aorta, the strongest expression is found in the tunica media of the proximal ascending aorta, the descending thoracic aorta, the abdominal aorta and the coronary arteries. Within the kidney, expression is found in the interstitial cells.</text>
</comment>
<comment type="PTM">
    <text evidence="6 8 9 10 11">N-glycosylated. N-glycan heterogeneity at Asn-117: Hex5HexNAc4 (minor), dHex1Hex5HexNAc4 (major), Hex6HexNAc5 (minor) and dHex1Hex6HexNAc5 (minor).</text>
</comment>
<accession>Q6EMK4</accession>
<accession>Q6UXL4</accession>
<accession>Q6UXL5</accession>
<accession>Q96CX1</accession>
<evidence type="ECO:0000255" key="1"/>
<evidence type="ECO:0000255" key="2">
    <source>
        <dbReference type="PROSITE-ProRule" id="PRU00076"/>
    </source>
</evidence>
<evidence type="ECO:0000255" key="3">
    <source>
        <dbReference type="PROSITE-ProRule" id="PRU00316"/>
    </source>
</evidence>
<evidence type="ECO:0000256" key="4">
    <source>
        <dbReference type="SAM" id="MobiDB-lite"/>
    </source>
</evidence>
<evidence type="ECO:0000269" key="5">
    <source>
    </source>
</evidence>
<evidence type="ECO:0000269" key="6">
    <source>
    </source>
</evidence>
<evidence type="ECO:0000269" key="7">
    <source>
    </source>
</evidence>
<evidence type="ECO:0000269" key="8">
    <source>
    </source>
</evidence>
<evidence type="ECO:0000269" key="9">
    <source>
    </source>
</evidence>
<evidence type="ECO:0000269" key="10">
    <source>
    </source>
</evidence>
<evidence type="ECO:0000269" key="11">
    <source>
    </source>
</evidence>
<evidence type="ECO:0000305" key="12"/>
<evidence type="ECO:0000305" key="13">
    <source>
    </source>
</evidence>
<proteinExistence type="evidence at protein level"/>
<dbReference type="EMBL" id="AY166584">
    <property type="protein sequence ID" value="AAO27704.1"/>
    <property type="molecule type" value="mRNA"/>
</dbReference>
<dbReference type="EMBL" id="AY358298">
    <property type="protein sequence ID" value="AAQ88665.1"/>
    <property type="molecule type" value="mRNA"/>
</dbReference>
<dbReference type="EMBL" id="AY358299">
    <property type="protein sequence ID" value="AAQ88666.1"/>
    <property type="molecule type" value="mRNA"/>
</dbReference>
<dbReference type="EMBL" id="BC013767">
    <property type="protein sequence ID" value="AAH13767.1"/>
    <property type="molecule type" value="mRNA"/>
</dbReference>
<dbReference type="EMBL" id="BC068575">
    <property type="protein sequence ID" value="AAH68575.1"/>
    <property type="molecule type" value="mRNA"/>
</dbReference>
<dbReference type="CCDS" id="CCDS10514.1"/>
<dbReference type="RefSeq" id="NP_612449.2">
    <property type="nucleotide sequence ID" value="NM_138440.3"/>
</dbReference>
<dbReference type="SMR" id="Q6EMK4"/>
<dbReference type="BioGRID" id="125406">
    <property type="interactions" value="198"/>
</dbReference>
<dbReference type="DIP" id="DIP-46245N"/>
<dbReference type="FunCoup" id="Q6EMK4">
    <property type="interactions" value="159"/>
</dbReference>
<dbReference type="IntAct" id="Q6EMK4">
    <property type="interactions" value="101"/>
</dbReference>
<dbReference type="MINT" id="Q6EMK4"/>
<dbReference type="STRING" id="9606.ENSP00000306864"/>
<dbReference type="GlyConnect" id="670">
    <property type="glycosylation" value="13 N-Linked glycans (3 sites)"/>
</dbReference>
<dbReference type="GlyCosmos" id="Q6EMK4">
    <property type="glycosylation" value="9 sites, 17 glycans"/>
</dbReference>
<dbReference type="GlyGen" id="Q6EMK4">
    <property type="glycosylation" value="15 sites, 53 N-linked glycans (4 sites), 3 O-linked glycans (9 sites)"/>
</dbReference>
<dbReference type="iPTMnet" id="Q6EMK4"/>
<dbReference type="PhosphoSitePlus" id="Q6EMK4"/>
<dbReference type="SwissPalm" id="Q6EMK4"/>
<dbReference type="BioMuta" id="VASN"/>
<dbReference type="DMDM" id="74748436"/>
<dbReference type="CPTAC" id="non-CPTAC-1166"/>
<dbReference type="jPOST" id="Q6EMK4"/>
<dbReference type="MassIVE" id="Q6EMK4"/>
<dbReference type="PaxDb" id="9606-ENSP00000306864"/>
<dbReference type="PeptideAtlas" id="Q6EMK4"/>
<dbReference type="ProteomicsDB" id="66288"/>
<dbReference type="Pumba" id="Q6EMK4"/>
<dbReference type="Antibodypedia" id="2203">
    <property type="antibodies" value="217 antibodies from 27 providers"/>
</dbReference>
<dbReference type="DNASU" id="114990"/>
<dbReference type="Ensembl" id="ENST00000304735.4">
    <property type="protein sequence ID" value="ENSP00000306864.3"/>
    <property type="gene ID" value="ENSG00000168140.5"/>
</dbReference>
<dbReference type="Ensembl" id="ENST00000622615.1">
    <property type="protein sequence ID" value="ENSP00000481884.1"/>
    <property type="gene ID" value="ENSG00000274334.1"/>
</dbReference>
<dbReference type="GeneID" id="114990"/>
<dbReference type="KEGG" id="hsa:114990"/>
<dbReference type="MANE-Select" id="ENST00000304735.4">
    <property type="protein sequence ID" value="ENSP00000306864.3"/>
    <property type="RefSeq nucleotide sequence ID" value="NM_138440.3"/>
    <property type="RefSeq protein sequence ID" value="NP_612449.2"/>
</dbReference>
<dbReference type="UCSC" id="uc002cwj.1">
    <property type="organism name" value="human"/>
</dbReference>
<dbReference type="AGR" id="HGNC:18517"/>
<dbReference type="CTD" id="114990"/>
<dbReference type="DisGeNET" id="114990"/>
<dbReference type="GeneCards" id="VASN"/>
<dbReference type="HGNC" id="HGNC:18517">
    <property type="gene designation" value="VASN"/>
</dbReference>
<dbReference type="HPA" id="ENSG00000168140">
    <property type="expression patterns" value="Low tissue specificity"/>
</dbReference>
<dbReference type="MIM" id="608843">
    <property type="type" value="gene"/>
</dbReference>
<dbReference type="neXtProt" id="NX_Q6EMK4"/>
<dbReference type="OpenTargets" id="ENSG00000168140"/>
<dbReference type="PharmGKB" id="PA134974883"/>
<dbReference type="VEuPathDB" id="HostDB:ENSG00000168140"/>
<dbReference type="eggNOG" id="KOG0619">
    <property type="taxonomic scope" value="Eukaryota"/>
</dbReference>
<dbReference type="GeneTree" id="ENSGT00940000159318"/>
<dbReference type="HOGENOM" id="CLU_432517_0_0_1"/>
<dbReference type="InParanoid" id="Q6EMK4"/>
<dbReference type="OMA" id="VPQPQDC"/>
<dbReference type="OrthoDB" id="676979at2759"/>
<dbReference type="PAN-GO" id="Q6EMK4">
    <property type="GO annotations" value="5 GO annotations based on evolutionary models"/>
</dbReference>
<dbReference type="PhylomeDB" id="Q6EMK4"/>
<dbReference type="TreeFam" id="TF351825"/>
<dbReference type="PathwayCommons" id="Q6EMK4"/>
<dbReference type="SignaLink" id="Q6EMK4"/>
<dbReference type="BioGRID-ORCS" id="114990">
    <property type="hits" value="24 hits in 1149 CRISPR screens"/>
</dbReference>
<dbReference type="ChiTaRS" id="VASN">
    <property type="organism name" value="human"/>
</dbReference>
<dbReference type="GenomeRNAi" id="114990"/>
<dbReference type="Pharos" id="Q6EMK4">
    <property type="development level" value="Tbio"/>
</dbReference>
<dbReference type="PRO" id="PR:Q6EMK4"/>
<dbReference type="Proteomes" id="UP000005640">
    <property type="component" value="Chromosome 16"/>
</dbReference>
<dbReference type="RNAct" id="Q6EMK4">
    <property type="molecule type" value="protein"/>
</dbReference>
<dbReference type="Bgee" id="ENSG00000168140">
    <property type="expression patterns" value="Expressed in stromal cell of endometrium and 98 other cell types or tissues"/>
</dbReference>
<dbReference type="GO" id="GO:0009986">
    <property type="term" value="C:cell surface"/>
    <property type="evidence" value="ECO:0000314"/>
    <property type="project" value="UniProtKB"/>
</dbReference>
<dbReference type="GO" id="GO:0070062">
    <property type="term" value="C:extracellular exosome"/>
    <property type="evidence" value="ECO:0000314"/>
    <property type="project" value="UniProtKB"/>
</dbReference>
<dbReference type="GO" id="GO:0031012">
    <property type="term" value="C:extracellular matrix"/>
    <property type="evidence" value="ECO:0000318"/>
    <property type="project" value="GO_Central"/>
</dbReference>
<dbReference type="GO" id="GO:0005615">
    <property type="term" value="C:extracellular space"/>
    <property type="evidence" value="ECO:0000314"/>
    <property type="project" value="UniProtKB"/>
</dbReference>
<dbReference type="GO" id="GO:0005765">
    <property type="term" value="C:lysosomal membrane"/>
    <property type="evidence" value="ECO:0007005"/>
    <property type="project" value="UniProtKB"/>
</dbReference>
<dbReference type="GO" id="GO:0005739">
    <property type="term" value="C:mitochondrion"/>
    <property type="evidence" value="ECO:0007669"/>
    <property type="project" value="Ensembl"/>
</dbReference>
<dbReference type="GO" id="GO:0005886">
    <property type="term" value="C:plasma membrane"/>
    <property type="evidence" value="ECO:0000318"/>
    <property type="project" value="GO_Central"/>
</dbReference>
<dbReference type="GO" id="GO:0045296">
    <property type="term" value="F:cadherin binding"/>
    <property type="evidence" value="ECO:0007005"/>
    <property type="project" value="BHF-UCL"/>
</dbReference>
<dbReference type="GO" id="GO:0050431">
    <property type="term" value="F:transforming growth factor beta binding"/>
    <property type="evidence" value="ECO:0000353"/>
    <property type="project" value="UniProtKB"/>
</dbReference>
<dbReference type="GO" id="GO:0071456">
    <property type="term" value="P:cellular response to hypoxia"/>
    <property type="evidence" value="ECO:0007669"/>
    <property type="project" value="Ensembl"/>
</dbReference>
<dbReference type="GO" id="GO:0071461">
    <property type="term" value="P:cellular response to redox state"/>
    <property type="evidence" value="ECO:0007669"/>
    <property type="project" value="Ensembl"/>
</dbReference>
<dbReference type="GO" id="GO:0010719">
    <property type="term" value="P:negative regulation of epithelial to mesenchymal transition"/>
    <property type="evidence" value="ECO:0000315"/>
    <property type="project" value="UniProtKB"/>
</dbReference>
<dbReference type="GO" id="GO:0030512">
    <property type="term" value="P:negative regulation of transforming growth factor beta receptor signaling pathway"/>
    <property type="evidence" value="ECO:0000314"/>
    <property type="project" value="UniProtKB"/>
</dbReference>
<dbReference type="CDD" id="cd00054">
    <property type="entry name" value="EGF_CA"/>
    <property type="match status" value="1"/>
</dbReference>
<dbReference type="FunFam" id="2.60.40.10:FF:001413">
    <property type="entry name" value="Vasorin"/>
    <property type="match status" value="1"/>
</dbReference>
<dbReference type="FunFam" id="2.10.25.10:FF:000657">
    <property type="entry name" value="vasorin"/>
    <property type="match status" value="1"/>
</dbReference>
<dbReference type="FunFam" id="3.80.10.10:FF:000211">
    <property type="entry name" value="vasorin"/>
    <property type="match status" value="1"/>
</dbReference>
<dbReference type="FunFam" id="3.80.10.10:FF:000250">
    <property type="entry name" value="vasorin"/>
    <property type="match status" value="1"/>
</dbReference>
<dbReference type="Gene3D" id="2.60.40.10">
    <property type="entry name" value="Immunoglobulins"/>
    <property type="match status" value="1"/>
</dbReference>
<dbReference type="Gene3D" id="2.10.25.10">
    <property type="entry name" value="Laminin"/>
    <property type="match status" value="1"/>
</dbReference>
<dbReference type="Gene3D" id="3.80.10.10">
    <property type="entry name" value="Ribonuclease Inhibitor"/>
    <property type="match status" value="2"/>
</dbReference>
<dbReference type="InterPro" id="IPR000483">
    <property type="entry name" value="Cys-rich_flank_reg_C"/>
</dbReference>
<dbReference type="InterPro" id="IPR000742">
    <property type="entry name" value="EGF-like_dom"/>
</dbReference>
<dbReference type="InterPro" id="IPR003961">
    <property type="entry name" value="FN3_dom"/>
</dbReference>
<dbReference type="InterPro" id="IPR036116">
    <property type="entry name" value="FN3_sf"/>
</dbReference>
<dbReference type="InterPro" id="IPR013783">
    <property type="entry name" value="Ig-like_fold"/>
</dbReference>
<dbReference type="InterPro" id="IPR001611">
    <property type="entry name" value="Leu-rich_rpt"/>
</dbReference>
<dbReference type="InterPro" id="IPR003591">
    <property type="entry name" value="Leu-rich_rpt_typical-subtyp"/>
</dbReference>
<dbReference type="InterPro" id="IPR032675">
    <property type="entry name" value="LRR_dom_sf"/>
</dbReference>
<dbReference type="InterPro" id="IPR050541">
    <property type="entry name" value="LRR_TM_domain-containing"/>
</dbReference>
<dbReference type="InterPro" id="IPR000372">
    <property type="entry name" value="LRRNT"/>
</dbReference>
<dbReference type="PANTHER" id="PTHR24369">
    <property type="entry name" value="ANTIGEN BSP, PUTATIVE-RELATED"/>
    <property type="match status" value="1"/>
</dbReference>
<dbReference type="PANTHER" id="PTHR24369:SF160">
    <property type="entry name" value="VASORIN"/>
    <property type="match status" value="1"/>
</dbReference>
<dbReference type="Pfam" id="PF00008">
    <property type="entry name" value="EGF"/>
    <property type="match status" value="1"/>
</dbReference>
<dbReference type="Pfam" id="PF13855">
    <property type="entry name" value="LRR_8"/>
    <property type="match status" value="2"/>
</dbReference>
<dbReference type="PRINTS" id="PR00019">
    <property type="entry name" value="LEURICHRPT"/>
</dbReference>
<dbReference type="SMART" id="SM00181">
    <property type="entry name" value="EGF"/>
    <property type="match status" value="1"/>
</dbReference>
<dbReference type="SMART" id="SM00364">
    <property type="entry name" value="LRR_BAC"/>
    <property type="match status" value="4"/>
</dbReference>
<dbReference type="SMART" id="SM00365">
    <property type="entry name" value="LRR_SD22"/>
    <property type="match status" value="4"/>
</dbReference>
<dbReference type="SMART" id="SM00369">
    <property type="entry name" value="LRR_TYP"/>
    <property type="match status" value="8"/>
</dbReference>
<dbReference type="SMART" id="SM00082">
    <property type="entry name" value="LRRCT"/>
    <property type="match status" value="1"/>
</dbReference>
<dbReference type="SMART" id="SM00013">
    <property type="entry name" value="LRRNT"/>
    <property type="match status" value="1"/>
</dbReference>
<dbReference type="SUPFAM" id="SSF57196">
    <property type="entry name" value="EGF/Laminin"/>
    <property type="match status" value="1"/>
</dbReference>
<dbReference type="SUPFAM" id="SSF49265">
    <property type="entry name" value="Fibronectin type III"/>
    <property type="match status" value="1"/>
</dbReference>
<dbReference type="SUPFAM" id="SSF52058">
    <property type="entry name" value="L domain-like"/>
    <property type="match status" value="1"/>
</dbReference>
<dbReference type="PROSITE" id="PS00022">
    <property type="entry name" value="EGF_1"/>
    <property type="match status" value="1"/>
</dbReference>
<dbReference type="PROSITE" id="PS01186">
    <property type="entry name" value="EGF_2"/>
    <property type="match status" value="1"/>
</dbReference>
<dbReference type="PROSITE" id="PS50026">
    <property type="entry name" value="EGF_3"/>
    <property type="match status" value="1"/>
</dbReference>
<dbReference type="PROSITE" id="PS50853">
    <property type="entry name" value="FN3"/>
    <property type="match status" value="1"/>
</dbReference>
<dbReference type="PROSITE" id="PS51450">
    <property type="entry name" value="LRR"/>
    <property type="match status" value="7"/>
</dbReference>
<gene>
    <name type="primary">VASN</name>
    <name type="synonym">SLITL2</name>
    <name type="ORF">UNQ314/PRO357/PRO1282</name>
</gene>
<feature type="signal peptide" evidence="1">
    <location>
        <begin position="1"/>
        <end position="23"/>
    </location>
</feature>
<feature type="chain" id="PRO_0000232630" description="Vasorin">
    <location>
        <begin position="24"/>
        <end position="673"/>
    </location>
</feature>
<feature type="topological domain" description="Extracellular" evidence="1">
    <location>
        <begin position="24"/>
        <end position="575"/>
    </location>
</feature>
<feature type="transmembrane region" description="Helical" evidence="1">
    <location>
        <begin position="576"/>
        <end position="596"/>
    </location>
</feature>
<feature type="topological domain" description="Cytoplasmic" evidence="1">
    <location>
        <begin position="597"/>
        <end position="673"/>
    </location>
</feature>
<feature type="domain" description="LRRNT">
    <location>
        <begin position="24"/>
        <end position="51"/>
    </location>
</feature>
<feature type="repeat" description="LRR 1">
    <location>
        <begin position="52"/>
        <end position="74"/>
    </location>
</feature>
<feature type="repeat" description="LRR 2">
    <location>
        <begin position="77"/>
        <end position="98"/>
    </location>
</feature>
<feature type="repeat" description="LRR 3">
    <location>
        <begin position="101"/>
        <end position="122"/>
    </location>
</feature>
<feature type="repeat" description="LRR 4">
    <location>
        <begin position="125"/>
        <end position="146"/>
    </location>
</feature>
<feature type="repeat" description="LRR 5">
    <location>
        <begin position="149"/>
        <end position="170"/>
    </location>
</feature>
<feature type="repeat" description="LRR 6">
    <location>
        <begin position="171"/>
        <end position="191"/>
    </location>
</feature>
<feature type="repeat" description="LRR 7">
    <location>
        <begin position="193"/>
        <end position="214"/>
    </location>
</feature>
<feature type="repeat" description="LRR 8">
    <location>
        <begin position="217"/>
        <end position="238"/>
    </location>
</feature>
<feature type="repeat" description="LRR 9">
    <location>
        <begin position="240"/>
        <end position="262"/>
    </location>
</feature>
<feature type="repeat" description="LRR 10">
    <location>
        <begin position="265"/>
        <end position="287"/>
    </location>
</feature>
<feature type="domain" description="LRRCT">
    <location>
        <begin position="298"/>
        <end position="351"/>
    </location>
</feature>
<feature type="domain" description="EGF-like" evidence="2">
    <location>
        <begin position="405"/>
        <end position="442"/>
    </location>
</feature>
<feature type="domain" description="Fibronectin type-III" evidence="3">
    <location>
        <begin position="460"/>
        <end position="558"/>
    </location>
</feature>
<feature type="region of interest" description="Disordered" evidence="4">
    <location>
        <begin position="358"/>
        <end position="404"/>
    </location>
</feature>
<feature type="compositionally biased region" description="Low complexity" evidence="4">
    <location>
        <begin position="358"/>
        <end position="370"/>
    </location>
</feature>
<feature type="compositionally biased region" description="Pro residues" evidence="4">
    <location>
        <begin position="390"/>
        <end position="404"/>
    </location>
</feature>
<feature type="glycosylation site" description="N-linked (GlcNAc...) asparagine" evidence="10">
    <location>
        <position position="101"/>
    </location>
</feature>
<feature type="glycosylation site" description="N-linked (GlcNAc...) (complex) asparagine" evidence="8 9 11">
    <location>
        <position position="117"/>
    </location>
</feature>
<feature type="glycosylation site" description="N-linked (GlcNAc...) asparagine" evidence="8 10">
    <location>
        <position position="273"/>
    </location>
</feature>
<feature type="glycosylation site" description="N-linked (GlcNAc...) asparagine" evidence="1">
    <location>
        <position position="500"/>
    </location>
</feature>
<feature type="glycosylation site" description="N-linked (GlcNAc...) asparagine" evidence="1">
    <location>
        <position position="528"/>
    </location>
</feature>
<feature type="disulfide bond" evidence="2">
    <location>
        <begin position="409"/>
        <end position="420"/>
    </location>
</feature>
<feature type="disulfide bond" evidence="2">
    <location>
        <begin position="414"/>
        <end position="430"/>
    </location>
</feature>
<feature type="disulfide bond" evidence="2">
    <location>
        <begin position="432"/>
        <end position="441"/>
    </location>
</feature>
<feature type="sequence variant" id="VAR_025991" description="In dbSNP:rs3810818." evidence="5 7">
    <original>E</original>
    <variation>A</variation>
    <location>
        <position position="384"/>
    </location>
</feature>
<feature type="sequence conflict" description="In Ref. 2; AAQ88665." evidence="12" ref="2">
    <original>G</original>
    <variation>S</variation>
    <location>
        <position position="70"/>
    </location>
</feature>
<feature type="sequence conflict" description="In Ref. 2; AAQ88665." evidence="12" ref="2">
    <location>
        <begin position="91"/>
        <end position="165"/>
    </location>
</feature>
<reference key="1">
    <citation type="journal article" date="2004" name="Proc. Natl. Acad. Sci. U.S.A.">
        <title>Vasorin, a transforming growth factor beta-binding protein expressed in vascular smooth muscle cells, modulates the arterial response to injury in vivo.</title>
        <authorList>
            <person name="Ikeda Y."/>
            <person name="Imai Y."/>
            <person name="Kumagai H."/>
            <person name="Nosaka T."/>
            <person name="Morikawa Y."/>
            <person name="Hisaoka T."/>
            <person name="Manabe I."/>
            <person name="Maemura K."/>
            <person name="Nakaoka T."/>
            <person name="Imamura T."/>
            <person name="Miyazono K."/>
            <person name="Komuro I."/>
            <person name="Nagai R."/>
            <person name="Kitamura T."/>
        </authorList>
    </citation>
    <scope>NUCLEOTIDE SEQUENCE [MRNA]</scope>
    <scope>FUNCTION</scope>
    <scope>INTERACTION WITH TGFB1; TGFB2 AND TGFB3</scope>
    <scope>SUBCELLULAR LOCATION</scope>
    <scope>TISSUE SPECIFICITY</scope>
    <scope>GLYCOSYLATION</scope>
</reference>
<reference key="2">
    <citation type="journal article" date="2003" name="Genome Res.">
        <title>The secreted protein discovery initiative (SPDI), a large-scale effort to identify novel human secreted and transmembrane proteins: a bioinformatics assessment.</title>
        <authorList>
            <person name="Clark H.F."/>
            <person name="Gurney A.L."/>
            <person name="Abaya E."/>
            <person name="Baker K."/>
            <person name="Baldwin D.T."/>
            <person name="Brush J."/>
            <person name="Chen J."/>
            <person name="Chow B."/>
            <person name="Chui C."/>
            <person name="Crowley C."/>
            <person name="Currell B."/>
            <person name="Deuel B."/>
            <person name="Dowd P."/>
            <person name="Eaton D."/>
            <person name="Foster J.S."/>
            <person name="Grimaldi C."/>
            <person name="Gu Q."/>
            <person name="Hass P.E."/>
            <person name="Heldens S."/>
            <person name="Huang A."/>
            <person name="Kim H.S."/>
            <person name="Klimowski L."/>
            <person name="Jin Y."/>
            <person name="Johnson S."/>
            <person name="Lee J."/>
            <person name="Lewis L."/>
            <person name="Liao D."/>
            <person name="Mark M.R."/>
            <person name="Robbie E."/>
            <person name="Sanchez C."/>
            <person name="Schoenfeld J."/>
            <person name="Seshagiri S."/>
            <person name="Simmons L."/>
            <person name="Singh J."/>
            <person name="Smith V."/>
            <person name="Stinson J."/>
            <person name="Vagts A."/>
            <person name="Vandlen R.L."/>
            <person name="Watanabe C."/>
            <person name="Wieand D."/>
            <person name="Woods K."/>
            <person name="Xie M.-H."/>
            <person name="Yansura D.G."/>
            <person name="Yi S."/>
            <person name="Yu G."/>
            <person name="Yuan J."/>
            <person name="Zhang M."/>
            <person name="Zhang Z."/>
            <person name="Goddard A.D."/>
            <person name="Wood W.I."/>
            <person name="Godowski P.J."/>
            <person name="Gray A.M."/>
        </authorList>
    </citation>
    <scope>NUCLEOTIDE SEQUENCE [LARGE SCALE MRNA]</scope>
    <scope>VARIANT ALA-384</scope>
</reference>
<reference key="3">
    <citation type="journal article" date="2004" name="Genome Res.">
        <title>The status, quality, and expansion of the NIH full-length cDNA project: the Mammalian Gene Collection (MGC).</title>
        <authorList>
            <consortium name="The MGC Project Team"/>
        </authorList>
    </citation>
    <scope>NUCLEOTIDE SEQUENCE [LARGE SCALE MRNA]</scope>
    <scope>VARIANT ALA-384</scope>
    <source>
        <tissue>Lung</tissue>
        <tissue>Placenta</tissue>
    </source>
</reference>
<reference key="4">
    <citation type="journal article" date="2005" name="J. Proteome Res.">
        <title>Human plasma N-glycoproteome analysis by immunoaffinity subtraction, hydrazide chemistry, and mass spectrometry.</title>
        <authorList>
            <person name="Liu T."/>
            <person name="Qian W.-J."/>
            <person name="Gritsenko M.A."/>
            <person name="Camp D.G. II"/>
            <person name="Monroe M.E."/>
            <person name="Moore R.J."/>
            <person name="Smith R.D."/>
        </authorList>
    </citation>
    <scope>GLYCOSYLATION [LARGE SCALE ANALYSIS] AT ASN-117 AND ASN-273</scope>
    <source>
        <tissue>Plasma</tissue>
    </source>
</reference>
<reference key="5">
    <citation type="journal article" date="2008" name="Proc. Natl. Acad. Sci. U.S.A.">
        <title>A quantitative atlas of mitotic phosphorylation.</title>
        <authorList>
            <person name="Dephoure N."/>
            <person name="Zhou C."/>
            <person name="Villen J."/>
            <person name="Beausoleil S.A."/>
            <person name="Bakalarski C.E."/>
            <person name="Elledge S.J."/>
            <person name="Gygi S.P."/>
        </authorList>
    </citation>
    <scope>IDENTIFICATION BY MASS SPECTROMETRY [LARGE SCALE ANALYSIS]</scope>
    <source>
        <tissue>Cervix carcinoma</tissue>
    </source>
</reference>
<reference key="6">
    <citation type="journal article" date="2009" name="J. Proteome Res.">
        <title>Glycoproteomics analysis of human liver tissue by combination of multiple enzyme digestion and hydrazide chemistry.</title>
        <authorList>
            <person name="Chen R."/>
            <person name="Jiang X."/>
            <person name="Sun D."/>
            <person name="Han G."/>
            <person name="Wang F."/>
            <person name="Ye M."/>
            <person name="Wang L."/>
            <person name="Zou H."/>
        </authorList>
    </citation>
    <scope>GLYCOSYLATION [LARGE SCALE ANALYSIS] AT ASN-101 AND ASN-273</scope>
    <source>
        <tissue>Liver</tissue>
    </source>
</reference>
<reference key="7">
    <citation type="journal article" date="2009" name="Mol. Cell. Proteomics">
        <title>A strategy for precise and large scale identification of core fucosylated glycoproteins.</title>
        <authorList>
            <person name="Jia W."/>
            <person name="Lu Z."/>
            <person name="Fu Y."/>
            <person name="Wang H.P."/>
            <person name="Wang L.H."/>
            <person name="Chi H."/>
            <person name="Yuan Z.F."/>
            <person name="Zheng Z.B."/>
            <person name="Song L.N."/>
            <person name="Han H.H."/>
            <person name="Liang Y.M."/>
            <person name="Wang J.L."/>
            <person name="Cai Y."/>
            <person name="Zhang Y.K."/>
            <person name="Deng Y.L."/>
            <person name="Ying W.T."/>
            <person name="He S.M."/>
            <person name="Qian X.H."/>
        </authorList>
    </citation>
    <scope>GLYCOSYLATION AT ASN-117</scope>
</reference>
<reference key="8">
    <citation type="journal article" date="2012" name="Mol. Cell. Proteomics">
        <title>Human urinary glycoproteomics; attachment site specific analysis of N- and O-linked glycosylations by CID and ECD.</title>
        <authorList>
            <person name="Halim A."/>
            <person name="Nilsson J."/>
            <person name="Ruetschi U."/>
            <person name="Hesse C."/>
            <person name="Larson G."/>
        </authorList>
    </citation>
    <scope>GLYCOSYLATION AT ASN-117</scope>
    <scope>STRUCTURE OF CARBOHYDRATES</scope>
    <scope>IDENTIFICATION BY MASS SPECTROMETRY</scope>
</reference>
<sequence>MCSRVPLLLPLLLLLALGPGVQGCPSGCQCSQPQTVFCTARQGTTVPRDVPPDTVGLYVFENGITMLDAGSFAGLPGLQLLDLSQNQIASLPSGVFQPLANLSNLDLTANRLHEITNETFRGLRRLERLYLGKNRIRHIQPGAFDTLDRLLELKLQDNELRALPPLRLPRLLLLDLSHNSLLALEPGILDTANVEALRLAGLGLQQLDEGLFSRLRNLHDLDVSDNQLERVPPVIRGLRGLTRLRLAGNTRIAQLRPEDLAGLAALQELDVSNLSLQALPGDLSGLFPRLRLLAAARNPFNCVCPLSWFGPWVRESHVTLASPEETRCHFPPKNAGRLLLELDYADFGCPATTTTATVPTTRPVVREPTALSSSLAPTWLSPTEPATEAPSPPSTAPPTVGPVPQPQDCPPSTCLNGGTCHLGTRHHLACLCPEGFTGLYCESQMGQGTRPSPTPVTPRPPRSLTLGIEPVSPTSLRVGLQRYLQGSSVQLRSLRLTYRNLSGPDKRLVTLRLPASLAEYTVTQLRPNATYSVCVMPLGPGRVPEGEEACGEAHTPPAVHSNHAPVTQAREGNLPLLIAPALAAVLLAALAAVGAAYCVRRGRAMAAAAQDKGQVGPGAGPLELEGVKVPLEPGPKATEGGGEALPSGSECEVPLMGFPGPGLQSPLHAKPYI</sequence>
<organism>
    <name type="scientific">Homo sapiens</name>
    <name type="common">Human</name>
    <dbReference type="NCBI Taxonomy" id="9606"/>
    <lineage>
        <taxon>Eukaryota</taxon>
        <taxon>Metazoa</taxon>
        <taxon>Chordata</taxon>
        <taxon>Craniata</taxon>
        <taxon>Vertebrata</taxon>
        <taxon>Euteleostomi</taxon>
        <taxon>Mammalia</taxon>
        <taxon>Eutheria</taxon>
        <taxon>Euarchontoglires</taxon>
        <taxon>Primates</taxon>
        <taxon>Haplorrhini</taxon>
        <taxon>Catarrhini</taxon>
        <taxon>Hominidae</taxon>
        <taxon>Homo</taxon>
    </lineage>
</organism>